<sequence length="747" mass="85477">MTDSWERGKGRRTQPPWSAPNTQAQPGLRLYNSLTRSKELFVPQDGNKVTWYCCGPTVYDASHMGHARSYISFDILRRVLRDYFKYDVFYCMNITDIDDKIIKRARQRHLFQQYRERNPRPSDLLQDVSAALTPFLQRISEANDPDKRQMLERIHGSVSAALLPLQDAVSSNARAEELERLSQELMEAAVDLLSDWLDEKHGAQITDNSIFSQLPKHWESEYHRDMEALNVLPPDVLTRVSEYVPEIVAFVQRIVDNGYGYVSNGSVYFSTAKFHASEKHYYAKLVPEAVGDQKALQEGEGDLSISADRLSEKQSPNDFALWKASKPGEPSWESPWGKGRPGWHIECSAMAGSILGESMDIHGGGFDLRFPHHDNELAQSEAYFDNDHWVRYFLHTGHLTIAGCKMSKSLKNFITIKDALQKNTARQLRLAFLMHAWKDTLDYSSNTMESAVQYEKFMNEFFLNVKDLLRAPTDVTGQFVKWEVPELELNSCFYSKKAAVHEALCDNIDTRTVMEEMRSLVSQCNSYIASRKAAKQPPNRLLLRSVSSYLTAMLKVFGAIEGEEVIGFPIGGSDNSMNLESTVMPYLQVLSQFREGVRQIARQHKVTEVLQLSDLLRDDVLPELGVRLEDHEGLPTVVKLVDRETLLKEKEEKRKAEEEKQRKKEEAARKKQQQEAAKLEKMKVSPSQMFQLETDKYSQFDESGFPTHDTEGKELSKGQSKKLRKLYEAQEKLHKEYLQMAQNGTTG</sequence>
<gene>
    <name type="primary">cars1</name>
    <name type="synonym">cars</name>
</gene>
<accession>Q5M7N8</accession>
<protein>
    <recommendedName>
        <fullName>Cysteine--tRNA ligase, cytoplasmic</fullName>
        <ecNumber evidence="3">6.1.1.16</ecNumber>
    </recommendedName>
    <alternativeName>
        <fullName>Cysteinyl-tRNA synthetase</fullName>
        <shortName>CysRS</shortName>
    </alternativeName>
</protein>
<proteinExistence type="evidence at transcript level"/>
<keyword id="KW-0030">Aminoacyl-tRNA synthetase</keyword>
<keyword id="KW-0067">ATP-binding</keyword>
<keyword id="KW-0963">Cytoplasm</keyword>
<keyword id="KW-0436">Ligase</keyword>
<keyword id="KW-0479">Metal-binding</keyword>
<keyword id="KW-0547">Nucleotide-binding</keyword>
<keyword id="KW-0648">Protein biosynthesis</keyword>
<keyword id="KW-1185">Reference proteome</keyword>
<keyword id="KW-0862">Zinc</keyword>
<reference key="1">
    <citation type="submission" date="2004-12" db="EMBL/GenBank/DDBJ databases">
        <authorList>
            <consortium name="NIH - Xenopus Gene Collection (XGC) project"/>
        </authorList>
    </citation>
    <scope>NUCLEOTIDE SEQUENCE [LARGE SCALE MRNA]</scope>
    <source>
        <tissue>Embryo</tissue>
    </source>
</reference>
<feature type="chain" id="PRO_0000250747" description="Cysteine--tRNA ligase, cytoplasmic">
    <location>
        <begin position="1"/>
        <end position="747"/>
    </location>
</feature>
<feature type="region of interest" description="Disordered" evidence="4">
    <location>
        <begin position="1"/>
        <end position="25"/>
    </location>
</feature>
<feature type="region of interest" description="Disordered" evidence="4">
    <location>
        <begin position="651"/>
        <end position="722"/>
    </location>
</feature>
<feature type="short sequence motif" description="'HIGH' region">
    <location>
        <begin position="56"/>
        <end position="66"/>
    </location>
</feature>
<feature type="short sequence motif" description="'KIIK' region">
    <location>
        <begin position="100"/>
        <end position="103"/>
    </location>
</feature>
<feature type="short sequence motif" description="'KMSKS' region">
    <location>
        <begin position="405"/>
        <end position="409"/>
    </location>
</feature>
<feature type="compositionally biased region" description="Polar residues" evidence="4">
    <location>
        <begin position="15"/>
        <end position="25"/>
    </location>
</feature>
<feature type="compositionally biased region" description="Basic and acidic residues" evidence="4">
    <location>
        <begin position="651"/>
        <end position="683"/>
    </location>
</feature>
<feature type="binding site" evidence="2">
    <location>
        <position position="54"/>
    </location>
    <ligand>
        <name>Zn(2+)</name>
        <dbReference type="ChEBI" id="CHEBI:29105"/>
    </ligand>
</feature>
<feature type="binding site" evidence="2">
    <location>
        <position position="55"/>
    </location>
    <ligand>
        <name>L-cysteine</name>
        <dbReference type="ChEBI" id="CHEBI:35235"/>
    </ligand>
</feature>
<feature type="binding site" evidence="2">
    <location>
        <position position="95"/>
    </location>
    <ligand>
        <name>L-cysteine</name>
        <dbReference type="ChEBI" id="CHEBI:35235"/>
    </ligand>
</feature>
<feature type="binding site" evidence="2">
    <location>
        <position position="347"/>
    </location>
    <ligand>
        <name>Zn(2+)</name>
        <dbReference type="ChEBI" id="CHEBI:29105"/>
    </ligand>
</feature>
<feature type="binding site" evidence="2">
    <location>
        <position position="372"/>
    </location>
    <ligand>
        <name>L-cysteine</name>
        <dbReference type="ChEBI" id="CHEBI:35235"/>
    </ligand>
</feature>
<feature type="binding site" evidence="2">
    <location>
        <position position="372"/>
    </location>
    <ligand>
        <name>Zn(2+)</name>
        <dbReference type="ChEBI" id="CHEBI:29105"/>
    </ligand>
</feature>
<feature type="binding site" evidence="2">
    <location>
        <position position="376"/>
    </location>
    <ligand>
        <name>Zn(2+)</name>
        <dbReference type="ChEBI" id="CHEBI:29105"/>
    </ligand>
</feature>
<feature type="binding site" evidence="1">
    <location>
        <position position="408"/>
    </location>
    <ligand>
        <name>ATP</name>
        <dbReference type="ChEBI" id="CHEBI:30616"/>
    </ligand>
</feature>
<evidence type="ECO:0000250" key="1"/>
<evidence type="ECO:0000250" key="2">
    <source>
        <dbReference type="UniProtKB" id="P21888"/>
    </source>
</evidence>
<evidence type="ECO:0000250" key="3">
    <source>
        <dbReference type="UniProtKB" id="P49589"/>
    </source>
</evidence>
<evidence type="ECO:0000256" key="4">
    <source>
        <dbReference type="SAM" id="MobiDB-lite"/>
    </source>
</evidence>
<evidence type="ECO:0000305" key="5"/>
<comment type="function">
    <text evidence="3">Catalyzes the ATP-dependent ligation of cysteine to tRNA(Cys).</text>
</comment>
<comment type="catalytic activity">
    <reaction evidence="3">
        <text>tRNA(Cys) + L-cysteine + ATP = L-cysteinyl-tRNA(Cys) + AMP + diphosphate</text>
        <dbReference type="Rhea" id="RHEA:17773"/>
        <dbReference type="Rhea" id="RHEA-COMP:9661"/>
        <dbReference type="Rhea" id="RHEA-COMP:9679"/>
        <dbReference type="ChEBI" id="CHEBI:30616"/>
        <dbReference type="ChEBI" id="CHEBI:33019"/>
        <dbReference type="ChEBI" id="CHEBI:35235"/>
        <dbReference type="ChEBI" id="CHEBI:78442"/>
        <dbReference type="ChEBI" id="CHEBI:78517"/>
        <dbReference type="ChEBI" id="CHEBI:456215"/>
        <dbReference type="EC" id="6.1.1.16"/>
    </reaction>
    <physiologicalReaction direction="left-to-right" evidence="3">
        <dbReference type="Rhea" id="RHEA:17774"/>
    </physiologicalReaction>
</comment>
<comment type="cofactor">
    <cofactor evidence="2">
        <name>Zn(2+)</name>
        <dbReference type="ChEBI" id="CHEBI:29105"/>
    </cofactor>
    <text evidence="2">Binds 1 zinc ion per subunit.</text>
</comment>
<comment type="subunit">
    <text evidence="3">Homodimer.</text>
</comment>
<comment type="subcellular location">
    <subcellularLocation>
        <location evidence="3">Cytoplasm</location>
    </subcellularLocation>
</comment>
<comment type="similarity">
    <text evidence="5">Belongs to the class-I aminoacyl-tRNA synthetase family.</text>
</comment>
<name>SYCC_XENTR</name>
<organism>
    <name type="scientific">Xenopus tropicalis</name>
    <name type="common">Western clawed frog</name>
    <name type="synonym">Silurana tropicalis</name>
    <dbReference type="NCBI Taxonomy" id="8364"/>
    <lineage>
        <taxon>Eukaryota</taxon>
        <taxon>Metazoa</taxon>
        <taxon>Chordata</taxon>
        <taxon>Craniata</taxon>
        <taxon>Vertebrata</taxon>
        <taxon>Euteleostomi</taxon>
        <taxon>Amphibia</taxon>
        <taxon>Batrachia</taxon>
        <taxon>Anura</taxon>
        <taxon>Pipoidea</taxon>
        <taxon>Pipidae</taxon>
        <taxon>Xenopodinae</taxon>
        <taxon>Xenopus</taxon>
        <taxon>Silurana</taxon>
    </lineage>
</organism>
<dbReference type="EC" id="6.1.1.16" evidence="3"/>
<dbReference type="EMBL" id="BC088531">
    <property type="protein sequence ID" value="AAH88531.1"/>
    <property type="molecule type" value="mRNA"/>
</dbReference>
<dbReference type="RefSeq" id="NP_001011365.1">
    <property type="nucleotide sequence ID" value="NM_001011365.1"/>
</dbReference>
<dbReference type="SMR" id="Q5M7N8"/>
<dbReference type="FunCoup" id="Q5M7N8">
    <property type="interactions" value="2332"/>
</dbReference>
<dbReference type="STRING" id="8364.ENSXETP00000029259"/>
<dbReference type="PaxDb" id="8364-ENSXETP00000047324"/>
<dbReference type="DNASU" id="496832"/>
<dbReference type="GeneID" id="496832"/>
<dbReference type="KEGG" id="xtr:496832"/>
<dbReference type="AGR" id="Xenbase:XB-GENE-5825933"/>
<dbReference type="CTD" id="833"/>
<dbReference type="Xenbase" id="XB-GENE-5825933">
    <property type="gene designation" value="cars1"/>
</dbReference>
<dbReference type="eggNOG" id="KOG2007">
    <property type="taxonomic scope" value="Eukaryota"/>
</dbReference>
<dbReference type="InParanoid" id="Q5M7N8"/>
<dbReference type="OMA" id="FHNDMKS"/>
<dbReference type="OrthoDB" id="438179at2759"/>
<dbReference type="Proteomes" id="UP000008143">
    <property type="component" value="Chromosome 4"/>
</dbReference>
<dbReference type="Bgee" id="ENSXETG00000021868">
    <property type="expression patterns" value="Expressed in neurula embryo and 13 other cell types or tissues"/>
</dbReference>
<dbReference type="GO" id="GO:0005737">
    <property type="term" value="C:cytoplasm"/>
    <property type="evidence" value="ECO:0000250"/>
    <property type="project" value="UniProtKB"/>
</dbReference>
<dbReference type="GO" id="GO:0005524">
    <property type="term" value="F:ATP binding"/>
    <property type="evidence" value="ECO:0007669"/>
    <property type="project" value="UniProtKB-KW"/>
</dbReference>
<dbReference type="GO" id="GO:0004817">
    <property type="term" value="F:cysteine-tRNA ligase activity"/>
    <property type="evidence" value="ECO:0000250"/>
    <property type="project" value="UniProtKB"/>
</dbReference>
<dbReference type="GO" id="GO:0046872">
    <property type="term" value="F:metal ion binding"/>
    <property type="evidence" value="ECO:0007669"/>
    <property type="project" value="UniProtKB-KW"/>
</dbReference>
<dbReference type="GO" id="GO:0000049">
    <property type="term" value="F:tRNA binding"/>
    <property type="evidence" value="ECO:0000250"/>
    <property type="project" value="UniProtKB"/>
</dbReference>
<dbReference type="GO" id="GO:0006423">
    <property type="term" value="P:cysteinyl-tRNA aminoacylation"/>
    <property type="evidence" value="ECO:0000250"/>
    <property type="project" value="UniProtKB"/>
</dbReference>
<dbReference type="CDD" id="cd00672">
    <property type="entry name" value="CysRS_core"/>
    <property type="match status" value="1"/>
</dbReference>
<dbReference type="FunFam" id="3.40.50.620:FF:000027">
    <property type="entry name" value="Cysteine--tRNA ligase, cytoplasmic"/>
    <property type="match status" value="1"/>
</dbReference>
<dbReference type="FunFam" id="3.40.50.620:FF:000228">
    <property type="entry name" value="Cysteinyl-tRNA synthetase"/>
    <property type="match status" value="1"/>
</dbReference>
<dbReference type="Gene3D" id="3.40.50.620">
    <property type="entry name" value="HUPs"/>
    <property type="match status" value="1"/>
</dbReference>
<dbReference type="HAMAP" id="MF_00041">
    <property type="entry name" value="Cys_tRNA_synth"/>
    <property type="match status" value="1"/>
</dbReference>
<dbReference type="InterPro" id="IPR015803">
    <property type="entry name" value="Cys-tRNA-ligase"/>
</dbReference>
<dbReference type="InterPro" id="IPR024909">
    <property type="entry name" value="Cys-tRNA/MSH_ligase"/>
</dbReference>
<dbReference type="InterPro" id="IPR014729">
    <property type="entry name" value="Rossmann-like_a/b/a_fold"/>
</dbReference>
<dbReference type="InterPro" id="IPR032678">
    <property type="entry name" value="tRNA-synt_1_cat_dom"/>
</dbReference>
<dbReference type="InterPro" id="IPR009080">
    <property type="entry name" value="tRNAsynth_Ia_anticodon-bd"/>
</dbReference>
<dbReference type="NCBIfam" id="TIGR00435">
    <property type="entry name" value="cysS"/>
    <property type="match status" value="1"/>
</dbReference>
<dbReference type="PANTHER" id="PTHR10890:SF3">
    <property type="entry name" value="CYSTEINE--TRNA LIGASE, CYTOPLASMIC"/>
    <property type="match status" value="1"/>
</dbReference>
<dbReference type="PANTHER" id="PTHR10890">
    <property type="entry name" value="CYSTEINYL-TRNA SYNTHETASE"/>
    <property type="match status" value="1"/>
</dbReference>
<dbReference type="Pfam" id="PF01406">
    <property type="entry name" value="tRNA-synt_1e"/>
    <property type="match status" value="1"/>
</dbReference>
<dbReference type="PRINTS" id="PR00983">
    <property type="entry name" value="TRNASYNTHCYS"/>
</dbReference>
<dbReference type="SUPFAM" id="SSF47323">
    <property type="entry name" value="Anticodon-binding domain of a subclass of class I aminoacyl-tRNA synthetases"/>
    <property type="match status" value="1"/>
</dbReference>
<dbReference type="SUPFAM" id="SSF52374">
    <property type="entry name" value="Nucleotidylyl transferase"/>
    <property type="match status" value="1"/>
</dbReference>